<evidence type="ECO:0000250" key="1"/>
<evidence type="ECO:0000250" key="2">
    <source>
        <dbReference type="UniProtKB" id="Q6NS46"/>
    </source>
</evidence>
<evidence type="ECO:0000255" key="3">
    <source>
        <dbReference type="PROSITE-ProRule" id="PRU00180"/>
    </source>
</evidence>
<evidence type="ECO:0000256" key="4">
    <source>
        <dbReference type="SAM" id="MobiDB-lite"/>
    </source>
</evidence>
<evidence type="ECO:0000269" key="5">
    <source>
    </source>
</evidence>
<evidence type="ECO:0000269" key="6">
    <source>
    </source>
</evidence>
<evidence type="ECO:0000269" key="7">
    <source>
    </source>
</evidence>
<evidence type="ECO:0000269" key="8">
    <source>
    </source>
</evidence>
<evidence type="ECO:0000269" key="9">
    <source>
    </source>
</evidence>
<evidence type="ECO:0000269" key="10">
    <source>
    </source>
</evidence>
<evidence type="ECO:0000269" key="11">
    <source ref="5"/>
</evidence>
<evidence type="ECO:0000269" key="12">
    <source ref="6"/>
</evidence>
<evidence type="ECO:0000305" key="13"/>
<evidence type="ECO:0007744" key="14">
    <source>
    </source>
</evidence>
<evidence type="ECO:0007744" key="15">
    <source>
    </source>
</evidence>
<evidence type="ECO:0007744" key="16">
    <source>
    </source>
</evidence>
<evidence type="ECO:0007744" key="17">
    <source>
    </source>
</evidence>
<evidence type="ECO:0007744" key="18">
    <source>
    </source>
</evidence>
<evidence type="ECO:0007744" key="19">
    <source>
    </source>
</evidence>
<evidence type="ECO:0007744" key="20">
    <source>
    </source>
</evidence>
<evidence type="ECO:0007744" key="21">
    <source>
    </source>
</evidence>
<evidence type="ECO:0007829" key="22">
    <source>
        <dbReference type="PDB" id="1WI5"/>
    </source>
</evidence>
<protein>
    <recommendedName>
        <fullName>Protein RRP5 homolog</fullName>
    </recommendedName>
    <alternativeName>
        <fullName>NF-kappa-B-binding protein</fullName>
        <shortName>NFBP</shortName>
    </alternativeName>
    <alternativeName>
        <fullName>Programmed cell death protein 11</fullName>
    </alternativeName>
</protein>
<keyword id="KW-0002">3D-structure</keyword>
<keyword id="KW-0007">Acetylation</keyword>
<keyword id="KW-0903">Direct protein sequencing</keyword>
<keyword id="KW-1017">Isopeptide bond</keyword>
<keyword id="KW-0539">Nucleus</keyword>
<keyword id="KW-0597">Phosphoprotein</keyword>
<keyword id="KW-1267">Proteomics identification</keyword>
<keyword id="KW-1185">Reference proteome</keyword>
<keyword id="KW-0677">Repeat</keyword>
<keyword id="KW-0698">rRNA processing</keyword>
<keyword id="KW-0832">Ubl conjugation</keyword>
<comment type="function">
    <text evidence="8">Essential for the generation of mature 18S rRNA, specifically necessary for cleavages at sites A0, 1 and 2 of the 47S precursor. Directly interacts with U3 snoRNA.</text>
</comment>
<comment type="function">
    <text evidence="1">Involved in the biogenesis of rRNA.</text>
</comment>
<comment type="subunit">
    <text evidence="6">Interacts with NF-kappa-B p50/NFKB1 and NF-kappa-B p65/RELA.</text>
</comment>
<comment type="interaction">
    <interactant intactId="EBI-300028">
        <id>Q14690</id>
    </interactant>
    <interactant intactId="EBI-300010">
        <id>P19838</id>
        <label>NFKB1</label>
    </interactant>
    <organismsDiffer>false</organismsDiffer>
    <experiments>2</experiments>
</comment>
<comment type="subcellular location">
    <subcellularLocation>
        <location evidence="5 6 8">Nucleus</location>
        <location evidence="5 6 8">Nucleolus</location>
    </subcellularLocation>
</comment>
<comment type="sequence caution" evidence="13">
    <conflict type="erroneous translation">
        <sequence resource="EMBL-CDS" id="AAG01992"/>
    </conflict>
    <text>Wrong choice of frame.</text>
</comment>
<comment type="sequence caution" evidence="13">
    <conflict type="miscellaneous discrepancy">
        <sequence resource="EMBL-CDS" id="AAH49838"/>
    </conflict>
    <text>Contaminating sequence. Potential poly-A sequence.</text>
</comment>
<comment type="sequence caution" evidence="13">
    <conflict type="miscellaneous discrepancy">
        <sequence resource="EMBL-CDS" id="AAH64486"/>
    </conflict>
    <text>Contaminating sequence. Potential poly-A sequence.</text>
</comment>
<comment type="sequence caution" evidence="13">
    <conflict type="miscellaneous discrepancy">
        <sequence resource="EMBL-CDS" id="AAH80560"/>
    </conflict>
    <text>Contaminating sequence. Potential poly-A sequence.</text>
</comment>
<comment type="sequence caution" evidence="13">
    <conflict type="miscellaneous discrepancy">
        <sequence resource="EMBL-CDS" id="AAI11041"/>
    </conflict>
    <text>Contaminating sequence. Potential poly-A sequence.</text>
</comment>
<comment type="sequence caution" evidence="13">
    <conflict type="erroneous initiation">
        <sequence resource="EMBL-CDS" id="BAA11502"/>
    </conflict>
</comment>
<comment type="sequence caution" evidence="13">
    <conflict type="erroneous initiation">
        <sequence resource="EMBL-CDS" id="BAA11502"/>
    </conflict>
    <text>Extended N-terminus.</text>
</comment>
<feature type="initiator methionine" description="Removed" evidence="11 16 18">
    <location>
        <position position="1"/>
    </location>
</feature>
<feature type="chain" id="PRO_0000205762" description="Protein RRP5 homolog">
    <location>
        <begin position="2"/>
        <end position="1871"/>
    </location>
</feature>
<feature type="domain" description="S1 motif 1" evidence="3">
    <location>
        <begin position="83"/>
        <end position="171"/>
    </location>
</feature>
<feature type="domain" description="S1 motif 2" evidence="3">
    <location>
        <begin position="187"/>
        <end position="258"/>
    </location>
</feature>
<feature type="domain" description="S1 motif 3" evidence="3">
    <location>
        <begin position="281"/>
        <end position="346"/>
    </location>
</feature>
<feature type="domain" description="S1 motif 4" evidence="3">
    <location>
        <begin position="365"/>
        <end position="436"/>
    </location>
</feature>
<feature type="domain" description="S1 motif 5" evidence="3">
    <location>
        <begin position="453"/>
        <end position="522"/>
    </location>
</feature>
<feature type="domain" description="S1 motif 6" evidence="3">
    <location>
        <begin position="542"/>
        <end position="611"/>
    </location>
</feature>
<feature type="domain" description="S1 motif 7" evidence="3">
    <location>
        <begin position="636"/>
        <end position="707"/>
    </location>
</feature>
<feature type="domain" description="S1 motif 8" evidence="3">
    <location>
        <begin position="729"/>
        <end position="798"/>
    </location>
</feature>
<feature type="domain" description="S1 motif 9" evidence="3">
    <location>
        <begin position="1036"/>
        <end position="1109"/>
    </location>
</feature>
<feature type="domain" description="S1 motif 10" evidence="3">
    <location>
        <begin position="1149"/>
        <end position="1222"/>
    </location>
</feature>
<feature type="domain" description="S1 motif 11" evidence="3">
    <location>
        <begin position="1230"/>
        <end position="1298"/>
    </location>
</feature>
<feature type="domain" description="S1 motif 12" evidence="3">
    <location>
        <begin position="1324"/>
        <end position="1396"/>
    </location>
</feature>
<feature type="repeat" description="HAT 1">
    <location>
        <begin position="1599"/>
        <end position="1631"/>
    </location>
</feature>
<feature type="repeat" description="HAT 2">
    <location>
        <begin position="1705"/>
        <end position="1737"/>
    </location>
</feature>
<feature type="repeat" description="HAT 3">
    <location>
        <begin position="1775"/>
        <end position="1807"/>
    </location>
</feature>
<feature type="repeat" description="HAT 4">
    <location>
        <begin position="1809"/>
        <end position="1844"/>
    </location>
</feature>
<feature type="region of interest" description="Disordered" evidence="4">
    <location>
        <begin position="1"/>
        <end position="62"/>
    </location>
</feature>
<feature type="region of interest" description="Disordered" evidence="4">
    <location>
        <begin position="998"/>
        <end position="1018"/>
    </location>
</feature>
<feature type="region of interest" description="Disordered" evidence="4">
    <location>
        <begin position="1395"/>
        <end position="1531"/>
    </location>
</feature>
<feature type="region of interest" description="Disordered" evidence="4">
    <location>
        <begin position="1549"/>
        <end position="1586"/>
    </location>
</feature>
<feature type="compositionally biased region" description="Basic residues" evidence="4">
    <location>
        <begin position="43"/>
        <end position="59"/>
    </location>
</feature>
<feature type="compositionally biased region" description="Basic and acidic residues" evidence="4">
    <location>
        <begin position="1416"/>
        <end position="1459"/>
    </location>
</feature>
<feature type="compositionally biased region" description="Basic and acidic residues" evidence="4">
    <location>
        <begin position="1469"/>
        <end position="1484"/>
    </location>
</feature>
<feature type="compositionally biased region" description="Basic and acidic residues" evidence="4">
    <location>
        <begin position="1575"/>
        <end position="1586"/>
    </location>
</feature>
<feature type="modified residue" description="N-acetylalanine" evidence="11 16 18">
    <location>
        <position position="2"/>
    </location>
</feature>
<feature type="modified residue" description="Phosphoserine" evidence="19">
    <location>
        <position position="7"/>
    </location>
</feature>
<feature type="modified residue" description="Phosphoserine" evidence="19">
    <location>
        <position position="438"/>
    </location>
</feature>
<feature type="modified residue" description="Phosphoserine" evidence="17">
    <location>
        <position position="1360"/>
    </location>
</feature>
<feature type="modified residue" description="Phosphoserine" evidence="17">
    <location>
        <position position="1362"/>
    </location>
</feature>
<feature type="modified residue" description="Phosphoserine" evidence="2">
    <location>
        <position position="1476"/>
    </location>
</feature>
<feature type="modified residue" description="Phosphoserine" evidence="14">
    <location>
        <position position="1493"/>
    </location>
</feature>
<feature type="modified residue" description="Phosphoserine" evidence="14 15 19">
    <location>
        <position position="1498"/>
    </location>
</feature>
<feature type="cross-link" description="Glycyl lysine isopeptide (Lys-Gly) (interchain with G-Cter in SUMO1)" evidence="20">
    <location>
        <position position="1030"/>
    </location>
</feature>
<feature type="cross-link" description="Glycyl lysine isopeptide (Lys-Gly) (interchain with G-Cter in SUMO2)" evidence="21">
    <location>
        <position position="1416"/>
    </location>
</feature>
<feature type="sequence variant" id="VAR_076436" description="In dbSNP:rs150893869." evidence="9">
    <original>K</original>
    <variation>E</variation>
    <location>
        <position position="45"/>
    </location>
</feature>
<feature type="sequence variant" id="VAR_054485" description="In dbSNP:rs7074814.">
    <original>S</original>
    <variation>N</variation>
    <location>
        <position position="397"/>
    </location>
</feature>
<feature type="sequence variant" id="VAR_031669" description="In dbSNP:rs11598673.">
    <original>A</original>
    <variation>S</variation>
    <location>
        <position position="623"/>
    </location>
</feature>
<feature type="sequence variant" id="VAR_054486" description="In dbSNP:rs11591914.">
    <original>A</original>
    <variation>S</variation>
    <location>
        <position position="780"/>
    </location>
</feature>
<feature type="sequence variant" id="VAR_031670" description="In dbSNP:rs2986014." evidence="7 10">
    <original>L</original>
    <variation>F</variation>
    <location>
        <position position="1216"/>
    </location>
</feature>
<feature type="sequence variant" id="VAR_054487" description="In dbSNP:rs2274289.">
    <original>P</original>
    <variation>S</variation>
    <location>
        <position position="1453"/>
    </location>
</feature>
<feature type="sequence variant" id="VAR_014930" description="In dbSNP:rs7831." evidence="12">
    <original>D</original>
    <variation>A</variation>
    <location>
        <position position="1871"/>
    </location>
</feature>
<feature type="sequence conflict" description="In Ref. 4; AAH49838." evidence="13" ref="4">
    <location>
        <position position="1431"/>
    </location>
</feature>
<feature type="turn" evidence="22">
    <location>
        <begin position="181"/>
        <end position="183"/>
    </location>
</feature>
<feature type="strand" evidence="22">
    <location>
        <begin position="189"/>
        <end position="197"/>
    </location>
</feature>
<feature type="strand" evidence="22">
    <location>
        <begin position="199"/>
        <end position="205"/>
    </location>
</feature>
<feature type="strand" evidence="22">
    <location>
        <begin position="212"/>
        <end position="216"/>
    </location>
</feature>
<feature type="helix" evidence="22">
    <location>
        <begin position="217"/>
        <end position="227"/>
    </location>
</feature>
<feature type="strand" evidence="22">
    <location>
        <begin position="228"/>
        <end position="230"/>
    </location>
</feature>
<feature type="strand" evidence="22">
    <location>
        <begin position="238"/>
        <end position="245"/>
    </location>
</feature>
<feature type="strand" evidence="22">
    <location>
        <begin position="252"/>
        <end position="256"/>
    </location>
</feature>
<sequence>MANLEESFPRGGTRKIHKPEKAFQQSVEQDNLFDISTEEGSTKRKKSQKGPAKTKKLKIEKRESSKSAREKFEILSVESLCEGMRILGCVKEVNELELVISLPNGLQGFVQVTEICDAYTKKLNEQVTQEQPLKDLLHLPELFSPGMLVRCVVSSLGITDRGKKSVKLSLNPKNVNRVLSAEALKPGMLLTGTVSSLEDHGYLVDIGVDGTRAFLPLLKAQEYIRQKNKGAKLKVGQYLNCIVEKVKGNGGVVSLSVGHSEVSTAIATEQQSWNLNNLLPGLVVKAQVQKVTPFGLTLNFLTFFTGVVDFMHLDPKKAGTYFSNQAVRACILCVHPRTRVVHLSLRPIFLQPGRPLTRLSCQNLGAVLDDVPVQGFFKKAGATFRLKDGVLAYARLSHLSDSKNVFNPEAFKPGNTHKCRIIDYSQMDELALLSLRTSIIEAQYLRYHDIEPGAVVKGTVLTIKSYGMLVKVGEQMRGLVPPMHLADILMKNPEKKYHIGDEVKCRVLLCDPEAKKLMMTLKKTLIESKLPVITCYADAKPGLQTHGFIIRVKDYGCIVKFYNNVQGLVPKHELSTEYIPDPERVFYTGQVVKVVVLNCEPSKERMLLSFKLSSDPEPKKEPAGHSQKKGKAINIGQLVDVKVLEKTKDGLEVAVLPHNIRAFLPTSHLSDHVANGPLLHHWLQAGDILHRVLCLSQSEGRVLLCRKPALVSTVEGGQDPKNFSEIHPGMLLIGFVKSIKDYGVFIQFPSGLSGLAPKAIMSDKFVTSTSDHFVEGQTVAAKVTNVDEEKQRMLLSLRLSDCGLGDLAITSLLLLNQCLEELQGVRSLMSNRDSVLIQTLAEMTPGMFLDLVVQEVLEDGSVVFSGGPVPDLVLKASRYHRAGQEVESGQKKKVVILNVDLLKLEVHVSLHQDLVNRKARKLRKGSEHQAIVQHLEKSFAIASLVETGHLAAFSLTSHLNDTFRFDSEKLQVGQGVSLTLKTTEPGVTGLLLAVEGPAAKRTMRPTQKDSETVDEDEEVDPALTVGTIKKHTLSIGDMVTGTVKSIKPTHVVVTLEDGIIGCIHASHILDDVPEGTSPTTKLKVGKTVTARVIGGRDMKTFKYLPISHPRFVRTIPELSVRPSELEDGHTALNTHSVSPMEKIKQYQAGQTVTCFLKKYNVVKKWLEVEIAPDIRGRIPLLLTSLSFKVLKHPDKKFRVGQALRATVVGPDSSKTLLCLSLTGPHKLEEGEVAMGRVVKVTPNEGLTVSFPFGKIGTVSIFHMSDSYSETPLEDFVPQKVVRCYILSTADNVLTLSLRSSRTNPETKSKVEDPEINSIQDIKEGQLLRGYVGSIQPHGVFFRLGPSVVGLARYSHVSQHSPSKKALYNKHLPEGKLLTARVLRLNHQKNLVELSFLPGDTGKPDVLSASLEGQLTKQEERKTEAEERDQKGEKKNQKRNEKKNQKGQEEVEMPSKEKQQPQKPQAQKRGGRECRESGSEQERVSKKPKKAGLSEEDDSLVDVYYREGKEEAEETNVLPKEKQTKPAEAPRLQLSSGFAWNVGLDSLTPALPPLAESSDSEEDEKPHQATIKKSKKERELEKQKAEKELSRIEEALMDPGRQPESADDFDRLVLSSPNSSILWLQYMAFHLQATEIEKARAVAERALKTISFREEQEKLNVWVALLNLENMYGSQESLTKVFERAVQYNEPLKVFLHLADIYAKSEKFQEAGELYNRMLKRFRQEKAVWIKYGAFLLRRSQAAASHRVLQRALECLPSKEHVDVIAKFAQLEFQLGDAERAKAIFENTLSTYPKRTDVWSVYIDMTIKHGSQKDVRDIFERVIHLSLAPKRMKFFFKRYLDYEKQHGTEKDVQAVKAKALEYVEAKSSVLED</sequence>
<proteinExistence type="evidence at protein level"/>
<organism>
    <name type="scientific">Homo sapiens</name>
    <name type="common">Human</name>
    <dbReference type="NCBI Taxonomy" id="9606"/>
    <lineage>
        <taxon>Eukaryota</taxon>
        <taxon>Metazoa</taxon>
        <taxon>Chordata</taxon>
        <taxon>Craniata</taxon>
        <taxon>Vertebrata</taxon>
        <taxon>Euteleostomi</taxon>
        <taxon>Mammalia</taxon>
        <taxon>Eutheria</taxon>
        <taxon>Euarchontoglires</taxon>
        <taxon>Primates</taxon>
        <taxon>Haplorrhini</taxon>
        <taxon>Catarrhini</taxon>
        <taxon>Hominidae</taxon>
        <taxon>Homo</taxon>
    </lineage>
</organism>
<gene>
    <name type="primary">PDCD11</name>
    <name type="synonym">KIAA0185</name>
</gene>
<accession>Q14690</accession>
<accession>Q2TA92</accession>
<accession>Q5W093</accession>
<accession>Q6P2J3</accession>
<accession>Q86VQ8</accession>
<accession>Q9H4P1</accession>
<reference key="1">
    <citation type="journal article" date="1996" name="DNA Res.">
        <title>Prediction of the coding sequences of unidentified human genes. V. The coding sequences of 40 new genes (KIAA0161-KIAA0200) deduced by analysis of cDNA clones from human cell line KG-1.</title>
        <authorList>
            <person name="Nagase T."/>
            <person name="Seki N."/>
            <person name="Ishikawa K."/>
            <person name="Tanaka A."/>
            <person name="Nomura N."/>
        </authorList>
    </citation>
    <scope>NUCLEOTIDE SEQUENCE [LARGE SCALE MRNA]</scope>
    <scope>VARIANT PHE-1216</scope>
    <source>
        <tissue>Bone marrow</tissue>
    </source>
</reference>
<reference key="2">
    <citation type="journal article" date="2004" name="Nature">
        <title>The DNA sequence and comparative analysis of human chromosome 10.</title>
        <authorList>
            <person name="Deloukas P."/>
            <person name="Earthrowl M.E."/>
            <person name="Grafham D.V."/>
            <person name="Rubenfield M."/>
            <person name="French L."/>
            <person name="Steward C.A."/>
            <person name="Sims S.K."/>
            <person name="Jones M.C."/>
            <person name="Searle S."/>
            <person name="Scott C."/>
            <person name="Howe K."/>
            <person name="Hunt S.E."/>
            <person name="Andrews T.D."/>
            <person name="Gilbert J.G.R."/>
            <person name="Swarbreck D."/>
            <person name="Ashurst J.L."/>
            <person name="Taylor A."/>
            <person name="Battles J."/>
            <person name="Bird C.P."/>
            <person name="Ainscough R."/>
            <person name="Almeida J.P."/>
            <person name="Ashwell R.I.S."/>
            <person name="Ambrose K.D."/>
            <person name="Babbage A.K."/>
            <person name="Bagguley C.L."/>
            <person name="Bailey J."/>
            <person name="Banerjee R."/>
            <person name="Bates K."/>
            <person name="Beasley H."/>
            <person name="Bray-Allen S."/>
            <person name="Brown A.J."/>
            <person name="Brown J.Y."/>
            <person name="Burford D.C."/>
            <person name="Burrill W."/>
            <person name="Burton J."/>
            <person name="Cahill P."/>
            <person name="Camire D."/>
            <person name="Carter N.P."/>
            <person name="Chapman J.C."/>
            <person name="Clark S.Y."/>
            <person name="Clarke G."/>
            <person name="Clee C.M."/>
            <person name="Clegg S."/>
            <person name="Corby N."/>
            <person name="Coulson A."/>
            <person name="Dhami P."/>
            <person name="Dutta I."/>
            <person name="Dunn M."/>
            <person name="Faulkner L."/>
            <person name="Frankish A."/>
            <person name="Frankland J.A."/>
            <person name="Garner P."/>
            <person name="Garnett J."/>
            <person name="Gribble S."/>
            <person name="Griffiths C."/>
            <person name="Grocock R."/>
            <person name="Gustafson E."/>
            <person name="Hammond S."/>
            <person name="Harley J.L."/>
            <person name="Hart E."/>
            <person name="Heath P.D."/>
            <person name="Ho T.P."/>
            <person name="Hopkins B."/>
            <person name="Horne J."/>
            <person name="Howden P.J."/>
            <person name="Huckle E."/>
            <person name="Hynds C."/>
            <person name="Johnson C."/>
            <person name="Johnson D."/>
            <person name="Kana A."/>
            <person name="Kay M."/>
            <person name="Kimberley A.M."/>
            <person name="Kershaw J.K."/>
            <person name="Kokkinaki M."/>
            <person name="Laird G.K."/>
            <person name="Lawlor S."/>
            <person name="Lee H.M."/>
            <person name="Leongamornlert D.A."/>
            <person name="Laird G."/>
            <person name="Lloyd C."/>
            <person name="Lloyd D.M."/>
            <person name="Loveland J."/>
            <person name="Lovell J."/>
            <person name="McLaren S."/>
            <person name="McLay K.E."/>
            <person name="McMurray A."/>
            <person name="Mashreghi-Mohammadi M."/>
            <person name="Matthews L."/>
            <person name="Milne S."/>
            <person name="Nickerson T."/>
            <person name="Nguyen M."/>
            <person name="Overton-Larty E."/>
            <person name="Palmer S.A."/>
            <person name="Pearce A.V."/>
            <person name="Peck A.I."/>
            <person name="Pelan S."/>
            <person name="Phillimore B."/>
            <person name="Porter K."/>
            <person name="Rice C.M."/>
            <person name="Rogosin A."/>
            <person name="Ross M.T."/>
            <person name="Sarafidou T."/>
            <person name="Sehra H.K."/>
            <person name="Shownkeen R."/>
            <person name="Skuce C.D."/>
            <person name="Smith M."/>
            <person name="Standring L."/>
            <person name="Sycamore N."/>
            <person name="Tester J."/>
            <person name="Thorpe A."/>
            <person name="Torcasso W."/>
            <person name="Tracey A."/>
            <person name="Tromans A."/>
            <person name="Tsolas J."/>
            <person name="Wall M."/>
            <person name="Walsh J."/>
            <person name="Wang H."/>
            <person name="Weinstock K."/>
            <person name="West A.P."/>
            <person name="Willey D.L."/>
            <person name="Whitehead S.L."/>
            <person name="Wilming L."/>
            <person name="Wray P.W."/>
            <person name="Young L."/>
            <person name="Chen Y."/>
            <person name="Lovering R.C."/>
            <person name="Moschonas N.K."/>
            <person name="Siebert R."/>
            <person name="Fechtel K."/>
            <person name="Bentley D."/>
            <person name="Durbin R.M."/>
            <person name="Hubbard T."/>
            <person name="Doucette-Stamm L."/>
            <person name="Beck S."/>
            <person name="Smith D.R."/>
            <person name="Rogers J."/>
        </authorList>
    </citation>
    <scope>NUCLEOTIDE SEQUENCE [LARGE SCALE GENOMIC DNA]</scope>
</reference>
<reference key="3">
    <citation type="submission" date="2005-09" db="EMBL/GenBank/DDBJ databases">
        <authorList>
            <person name="Mural R.J."/>
            <person name="Istrail S."/>
            <person name="Sutton G.G."/>
            <person name="Florea L."/>
            <person name="Halpern A.L."/>
            <person name="Mobarry C.M."/>
            <person name="Lippert R."/>
            <person name="Walenz B."/>
            <person name="Shatkay H."/>
            <person name="Dew I."/>
            <person name="Miller J.R."/>
            <person name="Flanigan M.J."/>
            <person name="Edwards N.J."/>
            <person name="Bolanos R."/>
            <person name="Fasulo D."/>
            <person name="Halldorsson B.V."/>
            <person name="Hannenhalli S."/>
            <person name="Turner R."/>
            <person name="Yooseph S."/>
            <person name="Lu F."/>
            <person name="Nusskern D.R."/>
            <person name="Shue B.C."/>
            <person name="Zheng X.H."/>
            <person name="Zhong F."/>
            <person name="Delcher A.L."/>
            <person name="Huson D.H."/>
            <person name="Kravitz S.A."/>
            <person name="Mouchard L."/>
            <person name="Reinert K."/>
            <person name="Remington K.A."/>
            <person name="Clark A.G."/>
            <person name="Waterman M.S."/>
            <person name="Eichler E.E."/>
            <person name="Adams M.D."/>
            <person name="Hunkapiller M.W."/>
            <person name="Myers E.W."/>
            <person name="Venter J.C."/>
        </authorList>
    </citation>
    <scope>NUCLEOTIDE SEQUENCE [LARGE SCALE GENOMIC DNA]</scope>
</reference>
<reference key="4">
    <citation type="journal article" date="2004" name="Genome Res.">
        <title>The status, quality, and expansion of the NIH full-length cDNA project: the Mammalian Gene Collection (MGC).</title>
        <authorList>
            <consortium name="The MGC Project Team"/>
        </authorList>
    </citation>
    <scope>NUCLEOTIDE SEQUENCE [LARGE SCALE MRNA] OF 1-1442</scope>
    <scope>VARIANT PHE-1216</scope>
    <source>
        <tissue>Lymphoma</tissue>
        <tissue>Uterus</tissue>
    </source>
</reference>
<reference key="5">
    <citation type="submission" date="2009-07" db="UniProtKB">
        <authorList>
            <person name="Bienvenut W.V."/>
            <person name="Matallanas D."/>
            <person name="Kolch W."/>
        </authorList>
    </citation>
    <scope>PROTEIN SEQUENCE OF 2-10 AND 1343-1352</scope>
    <scope>CLEAVAGE OF INITIATOR METHIONINE</scope>
    <scope>ACETYLATION AT ALA-2</scope>
    <scope>IDENTIFICATION BY MASS SPECTROMETRY</scope>
    <source>
        <tissue>Mammary carcinoma</tissue>
    </source>
</reference>
<reference key="6">
    <citation type="submission" date="2000-07" db="EMBL/GenBank/DDBJ databases">
        <authorList>
            <person name="Zhou J."/>
            <person name="Yu W."/>
            <person name="Tang H."/>
            <person name="Mei G."/>
            <person name="Tsang Y.T.M."/>
            <person name="Bouck J."/>
            <person name="Gibbs R.A."/>
            <person name="Margolin J.F."/>
        </authorList>
    </citation>
    <scope>NUCLEOTIDE SEQUENCE [LARGE SCALE MRNA] OF 1508-1871</scope>
    <scope>VARIANT ALA-1871</scope>
    <source>
        <tissue>Brain</tissue>
    </source>
</reference>
<reference key="7">
    <citation type="journal article" date="2002" name="Mol. Biol. Cell">
        <title>Functional proteomic analysis of human nucleolus.</title>
        <authorList>
            <person name="Scherl A."/>
            <person name="Coute Y."/>
            <person name="Deon C."/>
            <person name="Calle A."/>
            <person name="Kindbeiter K."/>
            <person name="Sanchez J.-C."/>
            <person name="Greco A."/>
            <person name="Hochstrasser D.F."/>
            <person name="Diaz J.-J."/>
        </authorList>
    </citation>
    <scope>SUBCELLULAR LOCATION [LARGE SCALE ANALYSIS]</scope>
    <source>
        <tissue>Cervix carcinoma</tissue>
    </source>
</reference>
<reference key="8">
    <citation type="journal article" date="2003" name="J. Cell. Biochem.">
        <title>Identification of a novel protein from glial cells based on its ability to interact with NF-kappaB subunits.</title>
        <authorList>
            <person name="Sweet T."/>
            <person name="Khalili K."/>
            <person name="Sawaya B.E."/>
            <person name="Amini S."/>
        </authorList>
    </citation>
    <scope>INTERACTION WITH NFKB1 AND RELA</scope>
    <scope>SUBCELLULAR LOCATION</scope>
</reference>
<reference key="9">
    <citation type="journal article" date="2008" name="J. Cell. Physiol.">
        <title>Evidence for involvement of NFBP in processing of ribosomal RNA.</title>
        <authorList>
            <person name="Sweet T."/>
            <person name="Yen W."/>
            <person name="Khalili K."/>
            <person name="Amini S."/>
        </authorList>
    </citation>
    <scope>FUNCTION</scope>
    <scope>SUBCELLULAR LOCATION</scope>
</reference>
<reference key="10">
    <citation type="journal article" date="2008" name="Mol. Cell">
        <title>Kinase-selective enrichment enables quantitative phosphoproteomics of the kinome across the cell cycle.</title>
        <authorList>
            <person name="Daub H."/>
            <person name="Olsen J.V."/>
            <person name="Bairlein M."/>
            <person name="Gnad F."/>
            <person name="Oppermann F.S."/>
            <person name="Korner R."/>
            <person name="Greff Z."/>
            <person name="Keri G."/>
            <person name="Stemmann O."/>
            <person name="Mann M."/>
        </authorList>
    </citation>
    <scope>PHOSPHORYLATION [LARGE SCALE ANALYSIS] AT SER-1498</scope>
    <scope>IDENTIFICATION BY MASS SPECTROMETRY [LARGE SCALE ANALYSIS]</scope>
    <source>
        <tissue>Cervix carcinoma</tissue>
    </source>
</reference>
<reference key="11">
    <citation type="journal article" date="2008" name="Proc. Natl. Acad. Sci. U.S.A.">
        <title>A quantitative atlas of mitotic phosphorylation.</title>
        <authorList>
            <person name="Dephoure N."/>
            <person name="Zhou C."/>
            <person name="Villen J."/>
            <person name="Beausoleil S.A."/>
            <person name="Bakalarski C.E."/>
            <person name="Elledge S.J."/>
            <person name="Gygi S.P."/>
        </authorList>
    </citation>
    <scope>PHOSPHORYLATION [LARGE SCALE ANALYSIS] AT SER-1493 AND SER-1498</scope>
    <scope>IDENTIFICATION BY MASS SPECTROMETRY [LARGE SCALE ANALYSIS]</scope>
    <source>
        <tissue>Cervix carcinoma</tissue>
    </source>
</reference>
<reference key="12">
    <citation type="journal article" date="2009" name="Anal. Chem.">
        <title>Lys-N and trypsin cover complementary parts of the phosphoproteome in a refined SCX-based approach.</title>
        <authorList>
            <person name="Gauci S."/>
            <person name="Helbig A.O."/>
            <person name="Slijper M."/>
            <person name="Krijgsveld J."/>
            <person name="Heck A.J."/>
            <person name="Mohammed S."/>
        </authorList>
    </citation>
    <scope>ACETYLATION [LARGE SCALE ANALYSIS] AT ALA-2</scope>
    <scope>CLEAVAGE OF INITIATOR METHIONINE [LARGE SCALE ANALYSIS]</scope>
    <scope>IDENTIFICATION BY MASS SPECTROMETRY [LARGE SCALE ANALYSIS]</scope>
</reference>
<reference key="13">
    <citation type="journal article" date="2009" name="Sci. Signal.">
        <title>Quantitative phosphoproteomic analysis of T cell receptor signaling reveals system-wide modulation of protein-protein interactions.</title>
        <authorList>
            <person name="Mayya V."/>
            <person name="Lundgren D.H."/>
            <person name="Hwang S.-I."/>
            <person name="Rezaul K."/>
            <person name="Wu L."/>
            <person name="Eng J.K."/>
            <person name="Rodionov V."/>
            <person name="Han D.K."/>
        </authorList>
    </citation>
    <scope>IDENTIFICATION BY MASS SPECTROMETRY [LARGE SCALE ANALYSIS]</scope>
    <source>
        <tissue>Leukemic T-cell</tissue>
    </source>
</reference>
<reference key="14">
    <citation type="journal article" date="2011" name="BMC Syst. Biol.">
        <title>Initial characterization of the human central proteome.</title>
        <authorList>
            <person name="Burkard T.R."/>
            <person name="Planyavsky M."/>
            <person name="Kaupe I."/>
            <person name="Breitwieser F.P."/>
            <person name="Buerckstuemmer T."/>
            <person name="Bennett K.L."/>
            <person name="Superti-Furga G."/>
            <person name="Colinge J."/>
        </authorList>
    </citation>
    <scope>IDENTIFICATION BY MASS SPECTROMETRY [LARGE SCALE ANALYSIS]</scope>
</reference>
<reference key="15">
    <citation type="journal article" date="2011" name="Sci. Signal.">
        <title>System-wide temporal characterization of the proteome and phosphoproteome of human embryonic stem cell differentiation.</title>
        <authorList>
            <person name="Rigbolt K.T."/>
            <person name="Prokhorova T.A."/>
            <person name="Akimov V."/>
            <person name="Henningsen J."/>
            <person name="Johansen P.T."/>
            <person name="Kratchmarova I."/>
            <person name="Kassem M."/>
            <person name="Mann M."/>
            <person name="Olsen J.V."/>
            <person name="Blagoev B."/>
        </authorList>
    </citation>
    <scope>PHOSPHORYLATION [LARGE SCALE ANALYSIS] AT SER-1360 AND SER-1362</scope>
    <scope>IDENTIFICATION BY MASS SPECTROMETRY [LARGE SCALE ANALYSIS]</scope>
</reference>
<reference key="16">
    <citation type="journal article" date="2012" name="Mol. Cell. Proteomics">
        <title>Comparative large-scale characterisation of plant vs. mammal proteins reveals similar and idiosyncratic N-alpha acetylation features.</title>
        <authorList>
            <person name="Bienvenut W.V."/>
            <person name="Sumpton D."/>
            <person name="Martinez A."/>
            <person name="Lilla S."/>
            <person name="Espagne C."/>
            <person name="Meinnel T."/>
            <person name="Giglione C."/>
        </authorList>
    </citation>
    <scope>ACETYLATION [LARGE SCALE ANALYSIS] AT ALA-2</scope>
    <scope>CLEAVAGE OF INITIATOR METHIONINE [LARGE SCALE ANALYSIS]</scope>
    <scope>IDENTIFICATION BY MASS SPECTROMETRY [LARGE SCALE ANALYSIS]</scope>
</reference>
<reference key="17">
    <citation type="journal article" date="2012" name="Proc. Natl. Acad. Sci. U.S.A.">
        <title>N-terminal acetylome analyses and functional insights of the N-terminal acetyltransferase NatB.</title>
        <authorList>
            <person name="Van Damme P."/>
            <person name="Lasa M."/>
            <person name="Polevoda B."/>
            <person name="Gazquez C."/>
            <person name="Elosegui-Artola A."/>
            <person name="Kim D.S."/>
            <person name="De Juan-Pardo E."/>
            <person name="Demeyer K."/>
            <person name="Hole K."/>
            <person name="Larrea E."/>
            <person name="Timmerman E."/>
            <person name="Prieto J."/>
            <person name="Arnesen T."/>
            <person name="Sherman F."/>
            <person name="Gevaert K."/>
            <person name="Aldabe R."/>
        </authorList>
    </citation>
    <scope>IDENTIFICATION BY MASS SPECTROMETRY [LARGE SCALE ANALYSIS]</scope>
</reference>
<reference key="18">
    <citation type="journal article" date="2013" name="J. Proteome Res.">
        <title>Toward a comprehensive characterization of a human cancer cell phosphoproteome.</title>
        <authorList>
            <person name="Zhou H."/>
            <person name="Di Palma S."/>
            <person name="Preisinger C."/>
            <person name="Peng M."/>
            <person name="Polat A.N."/>
            <person name="Heck A.J."/>
            <person name="Mohammed S."/>
        </authorList>
    </citation>
    <scope>PHOSPHORYLATION [LARGE SCALE ANALYSIS] AT SER-7; SER-438 AND SER-1498</scope>
    <scope>IDENTIFICATION BY MASS SPECTROMETRY [LARGE SCALE ANALYSIS]</scope>
    <source>
        <tissue>Cervix carcinoma</tissue>
        <tissue>Erythroleukemia</tissue>
    </source>
</reference>
<reference key="19">
    <citation type="journal article" date="2014" name="Proc. Natl. Acad. Sci. U.S.A.">
        <title>Mapping of SUMO sites and analysis of SUMOylation changes induced by external stimuli.</title>
        <authorList>
            <person name="Impens F."/>
            <person name="Radoshevich L."/>
            <person name="Cossart P."/>
            <person name="Ribet D."/>
        </authorList>
    </citation>
    <scope>SUMOYLATION [LARGE SCALE ANALYSIS] AT LYS-1030</scope>
    <scope>IDENTIFICATION BY MASS SPECTROMETRY [LARGE SCALE ANALYSIS]</scope>
</reference>
<reference key="20">
    <citation type="journal article" date="2017" name="Nat. Struct. Mol. Biol.">
        <title>Site-specific mapping of the human SUMO proteome reveals co-modification with phosphorylation.</title>
        <authorList>
            <person name="Hendriks I.A."/>
            <person name="Lyon D."/>
            <person name="Young C."/>
            <person name="Jensen L.J."/>
            <person name="Vertegaal A.C."/>
            <person name="Nielsen M.L."/>
        </authorList>
    </citation>
    <scope>SUMOYLATION [LARGE SCALE ANALYSIS] AT LYS-1416</scope>
    <scope>IDENTIFICATION BY MASS SPECTROMETRY [LARGE SCALE ANALYSIS]</scope>
</reference>
<reference key="21">
    <citation type="submission" date="2004-11" db="PDB data bank">
        <title>Solution structure of the S1 RNA binding domain from human hypothetical protein BAA11502.</title>
        <authorList>
            <consortium name="RIKEN structural genomics initiative (RSGI)"/>
        </authorList>
    </citation>
    <scope>STRUCTURE BY NMR OF 173-278</scope>
</reference>
<reference key="22">
    <citation type="journal article" date="2016" name="J. Med. Genet.">
        <title>Homozygous missense mutation in the LMAN2L gene segregates with intellectual disability in a large consanguineous Pakistani family.</title>
        <authorList>
            <person name="Rafiullah R."/>
            <person name="Aslamkhan M."/>
            <person name="Paramasivam N."/>
            <person name="Thiel C."/>
            <person name="Mustafa G."/>
            <person name="Wiemann S."/>
            <person name="Schlesner M."/>
            <person name="Wade R.C."/>
            <person name="Rappold G.A."/>
            <person name="Berkel S."/>
        </authorList>
    </citation>
    <scope>VARIANT GLU-45</scope>
</reference>
<name>RRP5_HUMAN</name>
<dbReference type="EMBL" id="D80007">
    <property type="protein sequence ID" value="BAA11502.1"/>
    <property type="status" value="ALT_INIT"/>
    <property type="molecule type" value="mRNA"/>
</dbReference>
<dbReference type="EMBL" id="AL139339">
    <property type="status" value="NOT_ANNOTATED_CDS"/>
    <property type="molecule type" value="Genomic_DNA"/>
</dbReference>
<dbReference type="EMBL" id="AL591408">
    <property type="status" value="NOT_ANNOTATED_CDS"/>
    <property type="molecule type" value="Genomic_DNA"/>
</dbReference>
<dbReference type="EMBL" id="AL603983">
    <property type="status" value="NOT_ANNOTATED_CDS"/>
    <property type="molecule type" value="Genomic_DNA"/>
</dbReference>
<dbReference type="EMBL" id="CH471066">
    <property type="protein sequence ID" value="EAW49641.1"/>
    <property type="molecule type" value="Genomic_DNA"/>
</dbReference>
<dbReference type="EMBL" id="BC049838">
    <property type="protein sequence ID" value="AAH49838.1"/>
    <property type="status" value="ALT_SEQ"/>
    <property type="molecule type" value="mRNA"/>
</dbReference>
<dbReference type="EMBL" id="BC064486">
    <property type="protein sequence ID" value="AAH64486.1"/>
    <property type="status" value="ALT_SEQ"/>
    <property type="molecule type" value="mRNA"/>
</dbReference>
<dbReference type="EMBL" id="BC080560">
    <property type="protein sequence ID" value="AAH80560.1"/>
    <property type="status" value="ALT_SEQ"/>
    <property type="molecule type" value="mRNA"/>
</dbReference>
<dbReference type="EMBL" id="BC111040">
    <property type="protein sequence ID" value="AAI11041.1"/>
    <property type="status" value="ALT_SEQ"/>
    <property type="molecule type" value="mRNA"/>
</dbReference>
<dbReference type="EMBL" id="AY007124">
    <property type="protein sequence ID" value="AAG01992.1"/>
    <property type="status" value="ALT_SEQ"/>
    <property type="molecule type" value="mRNA"/>
</dbReference>
<dbReference type="CCDS" id="CCDS31276.1"/>
<dbReference type="RefSeq" id="NP_055791.1">
    <property type="nucleotide sequence ID" value="NM_014976.2"/>
</dbReference>
<dbReference type="RefSeq" id="XP_011537841.1">
    <property type="nucleotide sequence ID" value="XM_011539539.3"/>
</dbReference>
<dbReference type="PDB" id="1WI5">
    <property type="method" value="NMR"/>
    <property type="chains" value="A=173-278"/>
</dbReference>
<dbReference type="PDBsum" id="1WI5"/>
<dbReference type="SMR" id="Q14690"/>
<dbReference type="BioGRID" id="116633">
    <property type="interactions" value="421"/>
</dbReference>
<dbReference type="FunCoup" id="Q14690">
    <property type="interactions" value="4064"/>
</dbReference>
<dbReference type="IntAct" id="Q14690">
    <property type="interactions" value="196"/>
</dbReference>
<dbReference type="MINT" id="Q14690"/>
<dbReference type="STRING" id="9606.ENSP00000358812"/>
<dbReference type="GlyGen" id="Q14690">
    <property type="glycosylation" value="1 site, 1 O-linked glycan (1 site)"/>
</dbReference>
<dbReference type="iPTMnet" id="Q14690"/>
<dbReference type="PhosphoSitePlus" id="Q14690"/>
<dbReference type="SwissPalm" id="Q14690"/>
<dbReference type="BioMuta" id="PDCD11"/>
<dbReference type="DMDM" id="145559523"/>
<dbReference type="CPTAC" id="CPTAC-1635"/>
<dbReference type="jPOST" id="Q14690"/>
<dbReference type="MassIVE" id="Q14690"/>
<dbReference type="PaxDb" id="9606-ENSP00000358812"/>
<dbReference type="PeptideAtlas" id="Q14690"/>
<dbReference type="ProteomicsDB" id="60128"/>
<dbReference type="Pumba" id="Q14690"/>
<dbReference type="Antibodypedia" id="31534">
    <property type="antibodies" value="47 antibodies from 15 providers"/>
</dbReference>
<dbReference type="DNASU" id="22984"/>
<dbReference type="Ensembl" id="ENST00000369797.8">
    <property type="protein sequence ID" value="ENSP00000358812.3"/>
    <property type="gene ID" value="ENSG00000148843.15"/>
</dbReference>
<dbReference type="GeneID" id="22984"/>
<dbReference type="KEGG" id="hsa:22984"/>
<dbReference type="MANE-Select" id="ENST00000369797.8">
    <property type="protein sequence ID" value="ENSP00000358812.3"/>
    <property type="RefSeq nucleotide sequence ID" value="NM_014976.2"/>
    <property type="RefSeq protein sequence ID" value="NP_055791.1"/>
</dbReference>
<dbReference type="UCSC" id="uc001kwy.2">
    <property type="organism name" value="human"/>
</dbReference>
<dbReference type="AGR" id="HGNC:13408"/>
<dbReference type="CTD" id="22984"/>
<dbReference type="DisGeNET" id="22984"/>
<dbReference type="GeneCards" id="PDCD11"/>
<dbReference type="HGNC" id="HGNC:13408">
    <property type="gene designation" value="PDCD11"/>
</dbReference>
<dbReference type="HPA" id="ENSG00000148843">
    <property type="expression patterns" value="Low tissue specificity"/>
</dbReference>
<dbReference type="MalaCards" id="PDCD11"/>
<dbReference type="MIM" id="612333">
    <property type="type" value="gene"/>
</dbReference>
<dbReference type="neXtProt" id="NX_Q14690"/>
<dbReference type="OpenTargets" id="ENSG00000148843"/>
<dbReference type="PharmGKB" id="PA134909758"/>
<dbReference type="VEuPathDB" id="HostDB:ENSG00000148843"/>
<dbReference type="eggNOG" id="KOG1070">
    <property type="taxonomic scope" value="Eukaryota"/>
</dbReference>
<dbReference type="GeneTree" id="ENSGT00390000012228"/>
<dbReference type="HOGENOM" id="CLU_000845_1_1_1"/>
<dbReference type="InParanoid" id="Q14690"/>
<dbReference type="OrthoDB" id="412781at2759"/>
<dbReference type="PAN-GO" id="Q14690">
    <property type="GO annotations" value="3 GO annotations based on evolutionary models"/>
</dbReference>
<dbReference type="PhylomeDB" id="Q14690"/>
<dbReference type="TreeFam" id="TF105697"/>
<dbReference type="PathwayCommons" id="Q14690"/>
<dbReference type="Reactome" id="R-HSA-6790901">
    <property type="pathway name" value="rRNA modification in the nucleus and cytosol"/>
</dbReference>
<dbReference type="Reactome" id="R-HSA-6791226">
    <property type="pathway name" value="Major pathway of rRNA processing in the nucleolus and cytosol"/>
</dbReference>
<dbReference type="SignaLink" id="Q14690"/>
<dbReference type="BioGRID-ORCS" id="22984">
    <property type="hits" value="749 hits in 1165 CRISPR screens"/>
</dbReference>
<dbReference type="CD-CODE" id="232F8A39">
    <property type="entry name" value="P-body"/>
</dbReference>
<dbReference type="CD-CODE" id="91857CE7">
    <property type="entry name" value="Nucleolus"/>
</dbReference>
<dbReference type="ChiTaRS" id="PDCD11">
    <property type="organism name" value="human"/>
</dbReference>
<dbReference type="EvolutionaryTrace" id="Q14690"/>
<dbReference type="GenomeRNAi" id="22984"/>
<dbReference type="Pharos" id="Q14690">
    <property type="development level" value="Tbio"/>
</dbReference>
<dbReference type="PRO" id="PR:Q14690"/>
<dbReference type="Proteomes" id="UP000005640">
    <property type="component" value="Chromosome 10"/>
</dbReference>
<dbReference type="RNAct" id="Q14690">
    <property type="molecule type" value="protein"/>
</dbReference>
<dbReference type="Bgee" id="ENSG00000148843">
    <property type="expression patterns" value="Expressed in primordial germ cell in gonad and 188 other cell types or tissues"/>
</dbReference>
<dbReference type="ExpressionAtlas" id="Q14690">
    <property type="expression patterns" value="baseline and differential"/>
</dbReference>
<dbReference type="GO" id="GO:0005829">
    <property type="term" value="C:cytosol"/>
    <property type="evidence" value="ECO:0007669"/>
    <property type="project" value="Ensembl"/>
</dbReference>
<dbReference type="GO" id="GO:0005730">
    <property type="term" value="C:nucleolus"/>
    <property type="evidence" value="ECO:0000318"/>
    <property type="project" value="GO_Central"/>
</dbReference>
<dbReference type="GO" id="GO:0005654">
    <property type="term" value="C:nucleoplasm"/>
    <property type="evidence" value="ECO:0000304"/>
    <property type="project" value="Reactome"/>
</dbReference>
<dbReference type="GO" id="GO:0005634">
    <property type="term" value="C:nucleus"/>
    <property type="evidence" value="ECO:0000314"/>
    <property type="project" value="UniProtKB"/>
</dbReference>
<dbReference type="GO" id="GO:0032040">
    <property type="term" value="C:small-subunit processome"/>
    <property type="evidence" value="ECO:0000318"/>
    <property type="project" value="GO_Central"/>
</dbReference>
<dbReference type="GO" id="GO:0051059">
    <property type="term" value="F:NF-kappaB binding"/>
    <property type="evidence" value="ECO:0000353"/>
    <property type="project" value="UniProtKB"/>
</dbReference>
<dbReference type="GO" id="GO:0003723">
    <property type="term" value="F:RNA binding"/>
    <property type="evidence" value="ECO:0007005"/>
    <property type="project" value="UniProtKB"/>
</dbReference>
<dbReference type="GO" id="GO:0006364">
    <property type="term" value="P:rRNA processing"/>
    <property type="evidence" value="ECO:0007669"/>
    <property type="project" value="UniProtKB-KW"/>
</dbReference>
<dbReference type="CDD" id="cd05701">
    <property type="entry name" value="S1_Rrp5_repeat_hs10"/>
    <property type="match status" value="1"/>
</dbReference>
<dbReference type="CDD" id="cd05702">
    <property type="entry name" value="S1_Rrp5_repeat_hs11_sc8"/>
    <property type="match status" value="1"/>
</dbReference>
<dbReference type="CDD" id="cd05703">
    <property type="entry name" value="S1_Rrp5_repeat_hs12_sc9"/>
    <property type="match status" value="1"/>
</dbReference>
<dbReference type="CDD" id="cd05704">
    <property type="entry name" value="S1_Rrp5_repeat_hs13"/>
    <property type="match status" value="1"/>
</dbReference>
<dbReference type="CDD" id="cd05705">
    <property type="entry name" value="S1_Rrp5_repeat_hs14"/>
    <property type="match status" value="1"/>
</dbReference>
<dbReference type="CDD" id="cd05693">
    <property type="entry name" value="S1_Rrp5_repeat_hs1_sc1"/>
    <property type="match status" value="1"/>
</dbReference>
<dbReference type="CDD" id="cd05694">
    <property type="entry name" value="S1_Rrp5_repeat_hs2_sc2"/>
    <property type="match status" value="1"/>
</dbReference>
<dbReference type="CDD" id="cd05695">
    <property type="entry name" value="S1_Rrp5_repeat_hs3"/>
    <property type="match status" value="1"/>
</dbReference>
<dbReference type="CDD" id="cd05696">
    <property type="entry name" value="S1_Rrp5_repeat_hs4"/>
    <property type="match status" value="1"/>
</dbReference>
<dbReference type="CDD" id="cd05697">
    <property type="entry name" value="S1_Rrp5_repeat_hs5"/>
    <property type="match status" value="1"/>
</dbReference>
<dbReference type="CDD" id="cd05698">
    <property type="entry name" value="S1_Rrp5_repeat_hs6_sc5"/>
    <property type="match status" value="1"/>
</dbReference>
<dbReference type="CDD" id="cd05699">
    <property type="entry name" value="S1_Rrp5_repeat_hs7"/>
    <property type="match status" value="1"/>
</dbReference>
<dbReference type="CDD" id="cd04461">
    <property type="entry name" value="S1_Rrp5_repeat_hs8_sc7"/>
    <property type="match status" value="1"/>
</dbReference>
<dbReference type="FunFam" id="1.25.40.10:FF:001887">
    <property type="entry name" value="Predicted protein"/>
    <property type="match status" value="1"/>
</dbReference>
<dbReference type="FunFam" id="1.25.40.10:FF:000065">
    <property type="entry name" value="Programmed cell death 11"/>
    <property type="match status" value="1"/>
</dbReference>
<dbReference type="FunFam" id="2.40.50.140:FF:000175">
    <property type="entry name" value="Programmed cell death 11"/>
    <property type="match status" value="1"/>
</dbReference>
<dbReference type="FunFam" id="2.40.50.140:FF:000194">
    <property type="entry name" value="Programmed cell death 11"/>
    <property type="match status" value="1"/>
</dbReference>
<dbReference type="FunFam" id="2.40.50.140:FF:000200">
    <property type="entry name" value="Programmed cell death 11"/>
    <property type="match status" value="1"/>
</dbReference>
<dbReference type="FunFam" id="2.40.50.140:FF:000222">
    <property type="entry name" value="Programmed cell death 11"/>
    <property type="match status" value="1"/>
</dbReference>
<dbReference type="FunFam" id="2.40.50.140:FF:000245">
    <property type="entry name" value="Programmed cell death 11"/>
    <property type="match status" value="1"/>
</dbReference>
<dbReference type="FunFam" id="2.40.50.140:FF:000103">
    <property type="entry name" value="protein RRP5 homolog"/>
    <property type="match status" value="2"/>
</dbReference>
<dbReference type="FunFam" id="2.40.50.140:FF:000148">
    <property type="entry name" value="protein RRP5 homolog isoform X1"/>
    <property type="match status" value="1"/>
</dbReference>
<dbReference type="FunFam" id="2.40.50.140:FF:000340">
    <property type="entry name" value="Unplaced genomic scaffold supercont1.162, whole genome shotgun sequence"/>
    <property type="match status" value="1"/>
</dbReference>
<dbReference type="Gene3D" id="2.40.50.140">
    <property type="entry name" value="Nucleic acid-binding proteins"/>
    <property type="match status" value="8"/>
</dbReference>
<dbReference type="Gene3D" id="1.25.40.10">
    <property type="entry name" value="Tetratricopeptide repeat domain"/>
    <property type="match status" value="1"/>
</dbReference>
<dbReference type="InterPro" id="IPR003107">
    <property type="entry name" value="HAT"/>
</dbReference>
<dbReference type="InterPro" id="IPR012340">
    <property type="entry name" value="NA-bd_OB-fold"/>
</dbReference>
<dbReference type="InterPro" id="IPR045209">
    <property type="entry name" value="Rrp5"/>
</dbReference>
<dbReference type="InterPro" id="IPR048058">
    <property type="entry name" value="Rrp5_S1_rpt_hs11_sc8"/>
</dbReference>
<dbReference type="InterPro" id="IPR048059">
    <property type="entry name" value="Rrp5_S1_rpt_hs1_sc1"/>
</dbReference>
<dbReference type="InterPro" id="IPR003029">
    <property type="entry name" value="S1_domain"/>
</dbReference>
<dbReference type="InterPro" id="IPR008847">
    <property type="entry name" value="Suf"/>
</dbReference>
<dbReference type="InterPro" id="IPR011990">
    <property type="entry name" value="TPR-like_helical_dom_sf"/>
</dbReference>
<dbReference type="PANTHER" id="PTHR23270">
    <property type="entry name" value="PROGRAMMED CELL DEATH PROTEIN 11 PRE-RRNA PROCESSING PROTEIN RRP5"/>
    <property type="match status" value="1"/>
</dbReference>
<dbReference type="PANTHER" id="PTHR23270:SF10">
    <property type="entry name" value="PROTEIN RRP5 HOMOLOG"/>
    <property type="match status" value="1"/>
</dbReference>
<dbReference type="Pfam" id="PF00575">
    <property type="entry name" value="S1"/>
    <property type="match status" value="3"/>
</dbReference>
<dbReference type="Pfam" id="PF23459">
    <property type="entry name" value="S1_RRP5"/>
    <property type="match status" value="9"/>
</dbReference>
<dbReference type="Pfam" id="PF05843">
    <property type="entry name" value="Suf"/>
    <property type="match status" value="1"/>
</dbReference>
<dbReference type="SMART" id="SM00386">
    <property type="entry name" value="HAT"/>
    <property type="match status" value="7"/>
</dbReference>
<dbReference type="SMART" id="SM00316">
    <property type="entry name" value="S1"/>
    <property type="match status" value="13"/>
</dbReference>
<dbReference type="SUPFAM" id="SSF50249">
    <property type="entry name" value="Nucleic acid-binding proteins"/>
    <property type="match status" value="11"/>
</dbReference>
<dbReference type="SUPFAM" id="SSF48452">
    <property type="entry name" value="TPR-like"/>
    <property type="match status" value="2"/>
</dbReference>
<dbReference type="PROSITE" id="PS50126">
    <property type="entry name" value="S1"/>
    <property type="match status" value="12"/>
</dbReference>